<proteinExistence type="inferred from homology"/>
<accession>Q5HTR6</accession>
<keyword id="KW-0071">Autoinducer synthesis</keyword>
<keyword id="KW-0408">Iron</keyword>
<keyword id="KW-0456">Lyase</keyword>
<keyword id="KW-0479">Metal-binding</keyword>
<keyword id="KW-0673">Quorum sensing</keyword>
<comment type="function">
    <text evidence="1">Involved in the synthesis of autoinducer 2 (AI-2) which is secreted by bacteria and is used to communicate both the cell density and the metabolic potential of the environment. The regulation of gene expression in response to changes in cell density is called quorum sensing. Catalyzes the transformation of S-ribosylhomocysteine (RHC) to homocysteine (HC) and 4,5-dihydroxy-2,3-pentadione (DPD).</text>
</comment>
<comment type="catalytic activity">
    <reaction evidence="1">
        <text>S-(5-deoxy-D-ribos-5-yl)-L-homocysteine = (S)-4,5-dihydroxypentane-2,3-dione + L-homocysteine</text>
        <dbReference type="Rhea" id="RHEA:17753"/>
        <dbReference type="ChEBI" id="CHEBI:29484"/>
        <dbReference type="ChEBI" id="CHEBI:58195"/>
        <dbReference type="ChEBI" id="CHEBI:58199"/>
        <dbReference type="EC" id="4.4.1.21"/>
    </reaction>
</comment>
<comment type="cofactor">
    <cofactor evidence="1">
        <name>Fe cation</name>
        <dbReference type="ChEBI" id="CHEBI:24875"/>
    </cofactor>
    <text evidence="1">Binds 1 Fe cation per subunit.</text>
</comment>
<comment type="subunit">
    <text evidence="1">Homodimer.</text>
</comment>
<comment type="similarity">
    <text evidence="1">Belongs to the LuxS family.</text>
</comment>
<gene>
    <name evidence="1" type="primary">luxS</name>
    <name type="ordered locus">CJE1332</name>
</gene>
<protein>
    <recommendedName>
        <fullName evidence="1">S-ribosylhomocysteine lyase</fullName>
        <ecNumber evidence="1">4.4.1.21</ecNumber>
    </recommendedName>
    <alternativeName>
        <fullName evidence="1">AI-2 synthesis protein</fullName>
    </alternativeName>
    <alternativeName>
        <fullName evidence="1">Autoinducer-2 production protein LuxS</fullName>
    </alternativeName>
</protein>
<name>LUXS_CAMJR</name>
<feature type="chain" id="PRO_0000172215" description="S-ribosylhomocysteine lyase">
    <location>
        <begin position="1"/>
        <end position="164"/>
    </location>
</feature>
<feature type="binding site" evidence="1">
    <location>
        <position position="54"/>
    </location>
    <ligand>
        <name>Fe cation</name>
        <dbReference type="ChEBI" id="CHEBI:24875"/>
    </ligand>
</feature>
<feature type="binding site" evidence="1">
    <location>
        <position position="58"/>
    </location>
    <ligand>
        <name>Fe cation</name>
        <dbReference type="ChEBI" id="CHEBI:24875"/>
    </ligand>
</feature>
<feature type="binding site" evidence="1">
    <location>
        <position position="128"/>
    </location>
    <ligand>
        <name>Fe cation</name>
        <dbReference type="ChEBI" id="CHEBI:24875"/>
    </ligand>
</feature>
<organism>
    <name type="scientific">Campylobacter jejuni (strain RM1221)</name>
    <dbReference type="NCBI Taxonomy" id="195099"/>
    <lineage>
        <taxon>Bacteria</taxon>
        <taxon>Pseudomonadati</taxon>
        <taxon>Campylobacterota</taxon>
        <taxon>Epsilonproteobacteria</taxon>
        <taxon>Campylobacterales</taxon>
        <taxon>Campylobacteraceae</taxon>
        <taxon>Campylobacter</taxon>
    </lineage>
</organism>
<evidence type="ECO:0000255" key="1">
    <source>
        <dbReference type="HAMAP-Rule" id="MF_00091"/>
    </source>
</evidence>
<dbReference type="EC" id="4.4.1.21" evidence="1"/>
<dbReference type="EMBL" id="CP000025">
    <property type="protein sequence ID" value="AAW35653.1"/>
    <property type="molecule type" value="Genomic_DNA"/>
</dbReference>
<dbReference type="RefSeq" id="WP_002860433.1">
    <property type="nucleotide sequence ID" value="NC_003912.7"/>
</dbReference>
<dbReference type="SMR" id="Q5HTR6"/>
<dbReference type="KEGG" id="cjr:CJE1332"/>
<dbReference type="HOGENOM" id="CLU_107531_2_0_7"/>
<dbReference type="GO" id="GO:0005506">
    <property type="term" value="F:iron ion binding"/>
    <property type="evidence" value="ECO:0007669"/>
    <property type="project" value="InterPro"/>
</dbReference>
<dbReference type="GO" id="GO:0043768">
    <property type="term" value="F:S-ribosylhomocysteine lyase activity"/>
    <property type="evidence" value="ECO:0007669"/>
    <property type="project" value="UniProtKB-UniRule"/>
</dbReference>
<dbReference type="GO" id="GO:0009372">
    <property type="term" value="P:quorum sensing"/>
    <property type="evidence" value="ECO:0007669"/>
    <property type="project" value="UniProtKB-UniRule"/>
</dbReference>
<dbReference type="Gene3D" id="3.30.1360.80">
    <property type="entry name" value="S-ribosylhomocysteinase (LuxS)"/>
    <property type="match status" value="1"/>
</dbReference>
<dbReference type="HAMAP" id="MF_00091">
    <property type="entry name" value="LuxS"/>
    <property type="match status" value="1"/>
</dbReference>
<dbReference type="InterPro" id="IPR037005">
    <property type="entry name" value="LuxS_sf"/>
</dbReference>
<dbReference type="InterPro" id="IPR011249">
    <property type="entry name" value="Metalloenz_LuxS/M16"/>
</dbReference>
<dbReference type="InterPro" id="IPR003815">
    <property type="entry name" value="S-ribosylhomocysteinase"/>
</dbReference>
<dbReference type="NCBIfam" id="NF002602">
    <property type="entry name" value="PRK02260.1-2"/>
    <property type="match status" value="1"/>
</dbReference>
<dbReference type="PANTHER" id="PTHR35799">
    <property type="entry name" value="S-RIBOSYLHOMOCYSTEINE LYASE"/>
    <property type="match status" value="1"/>
</dbReference>
<dbReference type="PANTHER" id="PTHR35799:SF1">
    <property type="entry name" value="S-RIBOSYLHOMOCYSTEINE LYASE"/>
    <property type="match status" value="1"/>
</dbReference>
<dbReference type="Pfam" id="PF02664">
    <property type="entry name" value="LuxS"/>
    <property type="match status" value="1"/>
</dbReference>
<dbReference type="PIRSF" id="PIRSF006160">
    <property type="entry name" value="AI2"/>
    <property type="match status" value="1"/>
</dbReference>
<dbReference type="PRINTS" id="PR01487">
    <property type="entry name" value="LUXSPROTEIN"/>
</dbReference>
<dbReference type="SUPFAM" id="SSF63411">
    <property type="entry name" value="LuxS/MPP-like metallohydrolase"/>
    <property type="match status" value="1"/>
</dbReference>
<reference key="1">
    <citation type="journal article" date="2005" name="PLoS Biol.">
        <title>Major structural differences and novel potential virulence mechanisms from the genomes of multiple Campylobacter species.</title>
        <authorList>
            <person name="Fouts D.E."/>
            <person name="Mongodin E.F."/>
            <person name="Mandrell R.E."/>
            <person name="Miller W.G."/>
            <person name="Rasko D.A."/>
            <person name="Ravel J."/>
            <person name="Brinkac L.M."/>
            <person name="DeBoy R.T."/>
            <person name="Parker C.T."/>
            <person name="Daugherty S.C."/>
            <person name="Dodson R.J."/>
            <person name="Durkin A.S."/>
            <person name="Madupu R."/>
            <person name="Sullivan S.A."/>
            <person name="Shetty J.U."/>
            <person name="Ayodeji M.A."/>
            <person name="Shvartsbeyn A."/>
            <person name="Schatz M.C."/>
            <person name="Badger J.H."/>
            <person name="Fraser C.M."/>
            <person name="Nelson K.E."/>
        </authorList>
    </citation>
    <scope>NUCLEOTIDE SEQUENCE [LARGE SCALE GENOMIC DNA]</scope>
    <source>
        <strain>RM1221</strain>
    </source>
</reference>
<sequence>MPLLDSFKVDHTKMPAPAVRLAKVMKTPKGDDISVFDLRFCIPNKDIMSEKGTHTLEHLFAGFMRDHLNSNSVEIIDISPMGCRTGFYMSLIGTPDEKSVAKAWEEAMKDVLSVSDQSKIPELNIYQCGTCAMHSLDEAKQIAQKVLNLGISIMNNKELKLENA</sequence>